<accession>Q02T72</accession>
<reference key="1">
    <citation type="journal article" date="2006" name="Genome Biol.">
        <title>Genomic analysis reveals that Pseudomonas aeruginosa virulence is combinatorial.</title>
        <authorList>
            <person name="Lee D.G."/>
            <person name="Urbach J.M."/>
            <person name="Wu G."/>
            <person name="Liberati N.T."/>
            <person name="Feinbaum R.L."/>
            <person name="Miyata S."/>
            <person name="Diggins L.T."/>
            <person name="He J."/>
            <person name="Saucier M."/>
            <person name="Deziel E."/>
            <person name="Friedman L."/>
            <person name="Li L."/>
            <person name="Grills G."/>
            <person name="Montgomery K."/>
            <person name="Kucherlapati R."/>
            <person name="Rahme L.G."/>
            <person name="Ausubel F.M."/>
        </authorList>
    </citation>
    <scope>NUCLEOTIDE SEQUENCE [LARGE SCALE GENOMIC DNA]</scope>
    <source>
        <strain>UCBPP-PA14</strain>
    </source>
</reference>
<feature type="chain" id="PRO_1000007562" description="Large ribosomal subunit protein uL29">
    <location>
        <begin position="1"/>
        <end position="63"/>
    </location>
</feature>
<evidence type="ECO:0000255" key="1">
    <source>
        <dbReference type="HAMAP-Rule" id="MF_00374"/>
    </source>
</evidence>
<evidence type="ECO:0000305" key="2"/>
<comment type="similarity">
    <text evidence="1">Belongs to the universal ribosomal protein uL29 family.</text>
</comment>
<organism>
    <name type="scientific">Pseudomonas aeruginosa (strain UCBPP-PA14)</name>
    <dbReference type="NCBI Taxonomy" id="208963"/>
    <lineage>
        <taxon>Bacteria</taxon>
        <taxon>Pseudomonadati</taxon>
        <taxon>Pseudomonadota</taxon>
        <taxon>Gammaproteobacteria</taxon>
        <taxon>Pseudomonadales</taxon>
        <taxon>Pseudomonadaceae</taxon>
        <taxon>Pseudomonas</taxon>
    </lineage>
</organism>
<keyword id="KW-0687">Ribonucleoprotein</keyword>
<keyword id="KW-0689">Ribosomal protein</keyword>
<gene>
    <name evidence="1" type="primary">rpmC</name>
    <name type="ordered locus">PA14_08930</name>
</gene>
<name>RL29_PSEAB</name>
<protein>
    <recommendedName>
        <fullName evidence="1">Large ribosomal subunit protein uL29</fullName>
    </recommendedName>
    <alternativeName>
        <fullName evidence="2">50S ribosomal protein L29</fullName>
    </alternativeName>
</protein>
<dbReference type="EMBL" id="CP000438">
    <property type="protein sequence ID" value="ABJ13526.1"/>
    <property type="molecule type" value="Genomic_DNA"/>
</dbReference>
<dbReference type="RefSeq" id="WP_003093720.1">
    <property type="nucleotide sequence ID" value="NZ_CP034244.1"/>
</dbReference>
<dbReference type="SMR" id="Q02T72"/>
<dbReference type="GeneID" id="79911813"/>
<dbReference type="KEGG" id="pau:PA14_08930"/>
<dbReference type="PseudoCAP" id="PA14_08930"/>
<dbReference type="HOGENOM" id="CLU_158491_1_2_6"/>
<dbReference type="BioCyc" id="PAER208963:G1G74-744-MONOMER"/>
<dbReference type="Proteomes" id="UP000000653">
    <property type="component" value="Chromosome"/>
</dbReference>
<dbReference type="GO" id="GO:0022625">
    <property type="term" value="C:cytosolic large ribosomal subunit"/>
    <property type="evidence" value="ECO:0007669"/>
    <property type="project" value="TreeGrafter"/>
</dbReference>
<dbReference type="GO" id="GO:0003735">
    <property type="term" value="F:structural constituent of ribosome"/>
    <property type="evidence" value="ECO:0007669"/>
    <property type="project" value="InterPro"/>
</dbReference>
<dbReference type="GO" id="GO:0006412">
    <property type="term" value="P:translation"/>
    <property type="evidence" value="ECO:0007669"/>
    <property type="project" value="UniProtKB-UniRule"/>
</dbReference>
<dbReference type="CDD" id="cd00427">
    <property type="entry name" value="Ribosomal_L29_HIP"/>
    <property type="match status" value="1"/>
</dbReference>
<dbReference type="FunFam" id="1.10.287.310:FF:000001">
    <property type="entry name" value="50S ribosomal protein L29"/>
    <property type="match status" value="1"/>
</dbReference>
<dbReference type="Gene3D" id="1.10.287.310">
    <property type="match status" value="1"/>
</dbReference>
<dbReference type="HAMAP" id="MF_00374">
    <property type="entry name" value="Ribosomal_uL29"/>
    <property type="match status" value="1"/>
</dbReference>
<dbReference type="InterPro" id="IPR050063">
    <property type="entry name" value="Ribosomal_protein_uL29"/>
</dbReference>
<dbReference type="InterPro" id="IPR001854">
    <property type="entry name" value="Ribosomal_uL29"/>
</dbReference>
<dbReference type="InterPro" id="IPR018254">
    <property type="entry name" value="Ribosomal_uL29_CS"/>
</dbReference>
<dbReference type="InterPro" id="IPR036049">
    <property type="entry name" value="Ribosomal_uL29_sf"/>
</dbReference>
<dbReference type="NCBIfam" id="TIGR00012">
    <property type="entry name" value="L29"/>
    <property type="match status" value="1"/>
</dbReference>
<dbReference type="PANTHER" id="PTHR10916">
    <property type="entry name" value="60S RIBOSOMAL PROTEIN L35/50S RIBOSOMAL PROTEIN L29"/>
    <property type="match status" value="1"/>
</dbReference>
<dbReference type="PANTHER" id="PTHR10916:SF0">
    <property type="entry name" value="LARGE RIBOSOMAL SUBUNIT PROTEIN UL29C"/>
    <property type="match status" value="1"/>
</dbReference>
<dbReference type="Pfam" id="PF00831">
    <property type="entry name" value="Ribosomal_L29"/>
    <property type="match status" value="1"/>
</dbReference>
<dbReference type="SUPFAM" id="SSF46561">
    <property type="entry name" value="Ribosomal protein L29 (L29p)"/>
    <property type="match status" value="1"/>
</dbReference>
<dbReference type="PROSITE" id="PS00579">
    <property type="entry name" value="RIBOSOMAL_L29"/>
    <property type="match status" value="1"/>
</dbReference>
<proteinExistence type="inferred from homology"/>
<sequence>MKANELREKSVEQLNEQLLGLLRDQFNLRMQKATGQLGQSHLLSQVKRDIARVKTVLNQQAGK</sequence>